<protein>
    <recommendedName>
        <fullName evidence="1">Arginine biosynthesis bifunctional protein ArgJ</fullName>
    </recommendedName>
    <domain>
        <recommendedName>
            <fullName evidence="1">Glutamate N-acetyltransferase</fullName>
            <ecNumber evidence="1">2.3.1.35</ecNumber>
        </recommendedName>
        <alternativeName>
            <fullName evidence="1">Ornithine acetyltransferase</fullName>
            <shortName evidence="1">OATase</shortName>
        </alternativeName>
        <alternativeName>
            <fullName evidence="1">Ornithine transacetylase</fullName>
        </alternativeName>
    </domain>
    <domain>
        <recommendedName>
            <fullName evidence="1">Amino-acid acetyltransferase</fullName>
            <ecNumber evidence="1">2.3.1.1</ecNumber>
        </recommendedName>
        <alternativeName>
            <fullName evidence="1">N-acetylglutamate synthase</fullName>
            <shortName evidence="1">AGSase</shortName>
        </alternativeName>
    </domain>
    <component>
        <recommendedName>
            <fullName evidence="1">Arginine biosynthesis bifunctional protein ArgJ alpha chain</fullName>
        </recommendedName>
    </component>
    <component>
        <recommendedName>
            <fullName evidence="1">Arginine biosynthesis bifunctional protein ArgJ beta chain</fullName>
        </recommendedName>
    </component>
</protein>
<reference key="1">
    <citation type="journal article" date="2003" name="Proc. Natl. Acad. Sci. U.S.A.">
        <title>The complete genome sequence of Mycobacterium bovis.</title>
        <authorList>
            <person name="Garnier T."/>
            <person name="Eiglmeier K."/>
            <person name="Camus J.-C."/>
            <person name="Medina N."/>
            <person name="Mansoor H."/>
            <person name="Pryor M."/>
            <person name="Duthoy S."/>
            <person name="Grondin S."/>
            <person name="Lacroix C."/>
            <person name="Monsempe C."/>
            <person name="Simon S."/>
            <person name="Harris B."/>
            <person name="Atkin R."/>
            <person name="Doggett J."/>
            <person name="Mayes R."/>
            <person name="Keating L."/>
            <person name="Wheeler P.R."/>
            <person name="Parkhill J."/>
            <person name="Barrell B.G."/>
            <person name="Cole S.T."/>
            <person name="Gordon S.V."/>
            <person name="Hewinson R.G."/>
        </authorList>
    </citation>
    <scope>NUCLEOTIDE SEQUENCE [LARGE SCALE GENOMIC DNA]</scope>
    <source>
        <strain>ATCC BAA-935 / AF2122/97</strain>
    </source>
</reference>
<reference key="2">
    <citation type="journal article" date="2017" name="Genome Announc.">
        <title>Updated reference genome sequence and annotation of Mycobacterium bovis AF2122/97.</title>
        <authorList>
            <person name="Malone K.M."/>
            <person name="Farrell D."/>
            <person name="Stuber T.P."/>
            <person name="Schubert O.T."/>
            <person name="Aebersold R."/>
            <person name="Robbe-Austerman S."/>
            <person name="Gordon S.V."/>
        </authorList>
    </citation>
    <scope>NUCLEOTIDE SEQUENCE [LARGE SCALE GENOMIC DNA]</scope>
    <scope>GENOME REANNOTATION</scope>
    <source>
        <strain>ATCC BAA-935 / AF2122/97</strain>
    </source>
</reference>
<comment type="function">
    <text evidence="1">Catalyzes two activities which are involved in the cyclic version of arginine biosynthesis: the synthesis of N-acetylglutamate from glutamate and acetyl-CoA as the acetyl donor, and of ornithine by transacetylation between N(2)-acetylornithine and glutamate.</text>
</comment>
<comment type="catalytic activity">
    <reaction evidence="1">
        <text>N(2)-acetyl-L-ornithine + L-glutamate = N-acetyl-L-glutamate + L-ornithine</text>
        <dbReference type="Rhea" id="RHEA:15349"/>
        <dbReference type="ChEBI" id="CHEBI:29985"/>
        <dbReference type="ChEBI" id="CHEBI:44337"/>
        <dbReference type="ChEBI" id="CHEBI:46911"/>
        <dbReference type="ChEBI" id="CHEBI:57805"/>
        <dbReference type="EC" id="2.3.1.35"/>
    </reaction>
</comment>
<comment type="catalytic activity">
    <reaction evidence="1">
        <text>L-glutamate + acetyl-CoA = N-acetyl-L-glutamate + CoA + H(+)</text>
        <dbReference type="Rhea" id="RHEA:24292"/>
        <dbReference type="ChEBI" id="CHEBI:15378"/>
        <dbReference type="ChEBI" id="CHEBI:29985"/>
        <dbReference type="ChEBI" id="CHEBI:44337"/>
        <dbReference type="ChEBI" id="CHEBI:57287"/>
        <dbReference type="ChEBI" id="CHEBI:57288"/>
        <dbReference type="EC" id="2.3.1.1"/>
    </reaction>
</comment>
<comment type="pathway">
    <text evidence="1">Amino-acid biosynthesis; L-arginine biosynthesis; L-ornithine and N-acetyl-L-glutamate from L-glutamate and N(2)-acetyl-L-ornithine (cyclic): step 1/1.</text>
</comment>
<comment type="pathway">
    <text evidence="1">Amino-acid biosynthesis; L-arginine biosynthesis; N(2)-acetyl-L-ornithine from L-glutamate: step 1/4.</text>
</comment>
<comment type="subunit">
    <text evidence="1">Heterotetramer of two alpha and two beta chains.</text>
</comment>
<comment type="subcellular location">
    <subcellularLocation>
        <location evidence="1">Cytoplasm</location>
    </subcellularLocation>
</comment>
<comment type="similarity">
    <text evidence="1">Belongs to the ArgJ family.</text>
</comment>
<dbReference type="EC" id="2.3.1.35" evidence="1"/>
<dbReference type="EC" id="2.3.1.1" evidence="1"/>
<dbReference type="EMBL" id="LT708304">
    <property type="protein sequence ID" value="SIU00284.1"/>
    <property type="molecule type" value="Genomic_DNA"/>
</dbReference>
<dbReference type="RefSeq" id="NP_855333.1">
    <property type="nucleotide sequence ID" value="NC_002945.3"/>
</dbReference>
<dbReference type="RefSeq" id="WP_003408160.1">
    <property type="nucleotide sequence ID" value="NC_002945.4"/>
</dbReference>
<dbReference type="SMR" id="P63572"/>
<dbReference type="KEGG" id="mbo:BQ2027_MB1681"/>
<dbReference type="PATRIC" id="fig|233413.5.peg.1834"/>
<dbReference type="UniPathway" id="UPA00068">
    <property type="reaction ID" value="UER00106"/>
</dbReference>
<dbReference type="UniPathway" id="UPA00068">
    <property type="reaction ID" value="UER00111"/>
</dbReference>
<dbReference type="Proteomes" id="UP000001419">
    <property type="component" value="Chromosome"/>
</dbReference>
<dbReference type="GO" id="GO:0005737">
    <property type="term" value="C:cytoplasm"/>
    <property type="evidence" value="ECO:0007669"/>
    <property type="project" value="UniProtKB-SubCell"/>
</dbReference>
<dbReference type="GO" id="GO:0004358">
    <property type="term" value="F:glutamate N-acetyltransferase activity"/>
    <property type="evidence" value="ECO:0007669"/>
    <property type="project" value="UniProtKB-UniRule"/>
</dbReference>
<dbReference type="GO" id="GO:0004042">
    <property type="term" value="F:L-glutamate N-acetyltransferase activity"/>
    <property type="evidence" value="ECO:0007669"/>
    <property type="project" value="UniProtKB-UniRule"/>
</dbReference>
<dbReference type="GO" id="GO:0006526">
    <property type="term" value="P:L-arginine biosynthetic process"/>
    <property type="evidence" value="ECO:0007669"/>
    <property type="project" value="UniProtKB-UniRule"/>
</dbReference>
<dbReference type="GO" id="GO:0006592">
    <property type="term" value="P:ornithine biosynthetic process"/>
    <property type="evidence" value="ECO:0007669"/>
    <property type="project" value="TreeGrafter"/>
</dbReference>
<dbReference type="CDD" id="cd02152">
    <property type="entry name" value="OAT"/>
    <property type="match status" value="1"/>
</dbReference>
<dbReference type="FunFam" id="3.10.20.340:FF:000005">
    <property type="entry name" value="Arginine biosynthesis bifunctional protein ArgJ"/>
    <property type="match status" value="1"/>
</dbReference>
<dbReference type="FunFam" id="3.30.2330.10:FF:000002">
    <property type="entry name" value="Arginine biosynthesis bifunctional protein ArgJ"/>
    <property type="match status" value="1"/>
</dbReference>
<dbReference type="FunFam" id="3.60.70.12:FF:000005">
    <property type="entry name" value="Arginine biosynthesis bifunctional protein ArgJ"/>
    <property type="match status" value="1"/>
</dbReference>
<dbReference type="Gene3D" id="3.30.2330.10">
    <property type="entry name" value="arginine biosynthesis bifunctional protein suprefamily"/>
    <property type="match status" value="1"/>
</dbReference>
<dbReference type="Gene3D" id="3.10.20.340">
    <property type="entry name" value="ArgJ beta chain, C-terminal domain"/>
    <property type="match status" value="1"/>
</dbReference>
<dbReference type="Gene3D" id="3.60.70.12">
    <property type="entry name" value="L-amino peptidase D-ALA esterase/amidase"/>
    <property type="match status" value="1"/>
</dbReference>
<dbReference type="HAMAP" id="MF_01106">
    <property type="entry name" value="ArgJ"/>
    <property type="match status" value="1"/>
</dbReference>
<dbReference type="InterPro" id="IPR002813">
    <property type="entry name" value="Arg_biosynth_ArgJ"/>
</dbReference>
<dbReference type="InterPro" id="IPR016117">
    <property type="entry name" value="ArgJ-like_dom_sf"/>
</dbReference>
<dbReference type="InterPro" id="IPR042195">
    <property type="entry name" value="ArgJ_beta_C"/>
</dbReference>
<dbReference type="NCBIfam" id="TIGR00120">
    <property type="entry name" value="ArgJ"/>
    <property type="match status" value="1"/>
</dbReference>
<dbReference type="NCBIfam" id="NF003802">
    <property type="entry name" value="PRK05388.1"/>
    <property type="match status" value="1"/>
</dbReference>
<dbReference type="PANTHER" id="PTHR23100">
    <property type="entry name" value="ARGININE BIOSYNTHESIS BIFUNCTIONAL PROTEIN ARGJ"/>
    <property type="match status" value="1"/>
</dbReference>
<dbReference type="PANTHER" id="PTHR23100:SF0">
    <property type="entry name" value="ARGININE BIOSYNTHESIS BIFUNCTIONAL PROTEIN ARGJ, MITOCHONDRIAL"/>
    <property type="match status" value="1"/>
</dbReference>
<dbReference type="Pfam" id="PF01960">
    <property type="entry name" value="ArgJ"/>
    <property type="match status" value="1"/>
</dbReference>
<dbReference type="SUPFAM" id="SSF56266">
    <property type="entry name" value="DmpA/ArgJ-like"/>
    <property type="match status" value="1"/>
</dbReference>
<accession>P63572</accession>
<accession>A0A1R3XZU4</accession>
<accession>P94988</accession>
<accession>X2BIF9</accession>
<proteinExistence type="inferred from homology"/>
<evidence type="ECO:0000255" key="1">
    <source>
        <dbReference type="HAMAP-Rule" id="MF_01106"/>
    </source>
</evidence>
<keyword id="KW-0012">Acyltransferase</keyword>
<keyword id="KW-0028">Amino-acid biosynthesis</keyword>
<keyword id="KW-0055">Arginine biosynthesis</keyword>
<keyword id="KW-0068">Autocatalytic cleavage</keyword>
<keyword id="KW-0963">Cytoplasm</keyword>
<keyword id="KW-0511">Multifunctional enzyme</keyword>
<keyword id="KW-1185">Reference proteome</keyword>
<keyword id="KW-0808">Transferase</keyword>
<name>ARGJ_MYCBO</name>
<gene>
    <name evidence="1" type="primary">argJ</name>
    <name type="ordered locus">BQ2027_MB1681</name>
</gene>
<sequence>MTDLAGTTRLLRAQGVTAPAGFRAAGVAAGIKASGALDLALVFNEGPDYAAAGVFTRNQVKAAPVLWTQQVLTTGRLRAVILNSGGANACTGPAGFADTHATAEAVAAALSDWGTETGAIEVAVCSTGLIGDRLPMDKLLAGVAHVVHEMHGGLVGGDEAAHAIMTTDNVPKQVALHHHDNWTVGGMAKGAGMLAPSLATMLCVLTTDAAAEPAALERALRRAAAATFDRLDIDGSCSTNDTVLLLSSGASEIPPAQADLDEAVLRVCDDLCAQLQADAEGVTKRVTVTVTGAATEDDALVAARQIARDSLVKTALFGSDPNWGRVLAAVGMAPITLDPDRISVSFNGAAVCVHGVGAPGAREVDLSDADIDITVDLGVGDGQARIRTTDLSHAYVEENSAYSS</sequence>
<feature type="chain" id="PRO_0000002195" description="Arginine biosynthesis bifunctional protein ArgJ alpha chain" evidence="1">
    <location>
        <begin position="1"/>
        <end position="199"/>
    </location>
</feature>
<feature type="chain" id="PRO_0000002196" description="Arginine biosynthesis bifunctional protein ArgJ beta chain" evidence="1">
    <location>
        <begin position="200"/>
        <end position="404"/>
    </location>
</feature>
<feature type="active site" description="Nucleophile" evidence="1">
    <location>
        <position position="200"/>
    </location>
</feature>
<feature type="binding site" evidence="1">
    <location>
        <position position="166"/>
    </location>
    <ligand>
        <name>substrate</name>
    </ligand>
</feature>
<feature type="binding site" evidence="1">
    <location>
        <position position="189"/>
    </location>
    <ligand>
        <name>substrate</name>
    </ligand>
</feature>
<feature type="binding site" evidence="1">
    <location>
        <position position="200"/>
    </location>
    <ligand>
        <name>substrate</name>
    </ligand>
</feature>
<feature type="binding site" evidence="1">
    <location>
        <position position="280"/>
    </location>
    <ligand>
        <name>substrate</name>
    </ligand>
</feature>
<feature type="binding site" evidence="1">
    <location>
        <position position="399"/>
    </location>
    <ligand>
        <name>substrate</name>
    </ligand>
</feature>
<feature type="binding site" evidence="1">
    <location>
        <position position="404"/>
    </location>
    <ligand>
        <name>substrate</name>
    </ligand>
</feature>
<feature type="site" description="Involved in the stabilization of negative charge on the oxyanion by the formation of the oxyanion hole" evidence="1">
    <location>
        <position position="127"/>
    </location>
</feature>
<feature type="site" description="Involved in the stabilization of negative charge on the oxyanion by the formation of the oxyanion hole" evidence="1">
    <location>
        <position position="128"/>
    </location>
</feature>
<feature type="site" description="Cleavage; by autolysis" evidence="1">
    <location>
        <begin position="199"/>
        <end position="200"/>
    </location>
</feature>
<organism>
    <name type="scientific">Mycobacterium bovis (strain ATCC BAA-935 / AF2122/97)</name>
    <dbReference type="NCBI Taxonomy" id="233413"/>
    <lineage>
        <taxon>Bacteria</taxon>
        <taxon>Bacillati</taxon>
        <taxon>Actinomycetota</taxon>
        <taxon>Actinomycetes</taxon>
        <taxon>Mycobacteriales</taxon>
        <taxon>Mycobacteriaceae</taxon>
        <taxon>Mycobacterium</taxon>
        <taxon>Mycobacterium tuberculosis complex</taxon>
    </lineage>
</organism>